<sequence length="462" mass="52109">MLGLTQHAQKVWRMKPFSPEVSPGSSPATAGHLLRISTLFLTLLELAQVCRGSVVSNRPFITVWNGDTHWCLTEYGVDVDVSVFDVVANKEQSFQGSNMTIFYREELGTYPYYTPTGEPVFGGLPQNASLVTHLAHTFQDIKAAMPEPDFSGLAVIDWEAWRPRWAFNWDSKDIYRQRSMELVQAEHPDWPETLVEAAAKNQFQEAAEAWMAGTLQLGQVLRPRGLWGYYGFPDCYNNDFLSLNYTGQCPVFVRDQNDQLGWLWNQSYALYPSIYLPAALMGTEKSQMYVRHRVQEALRVAIVSRDPHVPVMPYVQIFYEMTDYLLPLEELEHSLGESAAQGVAGAVLWLSSDKTSTKESCQAIKAYMDSTLGPFIVNVTSAALLCSEALCSGHGRCVRHPSYPEALLTLNPASFSIELTHDGRPPSLKGTLSLKDRAQMAMKFRCRCYRGWRGKWCDKRGM</sequence>
<comment type="function">
    <text evidence="4">May have a role in promoting tumor progression. May block the TGFB1-enhanced cell growth.</text>
</comment>
<comment type="catalytic activity">
    <reaction>
        <text>Random hydrolysis of (1-&gt;4)-linkages between N-acetyl-beta-D-glucosamine and D-glucuronate residues in hyaluronate.</text>
        <dbReference type="EC" id="3.2.1.35"/>
    </reaction>
</comment>
<comment type="biophysicochemical properties">
    <phDependence>
        <text evidence="5">Optimum pH is 3.5-4.0.</text>
    </phDependence>
</comment>
<comment type="subcellular location">
    <subcellularLocation>
        <location evidence="1">Secreted</location>
    </subcellularLocation>
    <subcellularLocation>
        <location evidence="1">Lysosome</location>
    </subcellularLocation>
</comment>
<comment type="alternative products">
    <event type="alternative splicing"/>
    <isoform>
        <id>Q91ZJ9-1</id>
        <name>1</name>
        <sequence type="displayed"/>
    </isoform>
    <isoform>
        <id>Q91ZJ9-2</id>
        <name>2</name>
        <sequence type="described" ref="VSP_015923"/>
    </isoform>
</comment>
<comment type="tissue specificity">
    <text evidence="3 5">Highly expressed in liver, kidney, lung and skin.</text>
</comment>
<comment type="developmental stage">
    <text evidence="3">Detected in embryos of all developmental stages, with high level at the 7 day stage.</text>
</comment>
<comment type="similarity">
    <text evidence="7">Belongs to the glycosyl hydrolase 56 family.</text>
</comment>
<name>HYAL1_MOUSE</name>
<feature type="signal peptide" evidence="2">
    <location>
        <begin position="1"/>
        <end position="52"/>
    </location>
</feature>
<feature type="chain" id="PRO_0000042624" description="Hyaluronidase-1">
    <location>
        <begin position="53"/>
        <end position="462"/>
    </location>
</feature>
<feature type="domain" description="EGF-like">
    <location>
        <begin position="446"/>
        <end position="457"/>
    </location>
</feature>
<feature type="active site" description="Proton donor" evidence="1">
    <location>
        <position position="159"/>
    </location>
</feature>
<feature type="glycosylation site" description="N-linked (GlcNAc...) asparagine" evidence="2">
    <location>
        <position position="98"/>
    </location>
</feature>
<feature type="glycosylation site" description="N-linked (GlcNAc...) asparagine" evidence="2">
    <location>
        <position position="127"/>
    </location>
</feature>
<feature type="glycosylation site" description="N-linked (GlcNAc...) asparagine" evidence="2">
    <location>
        <position position="244"/>
    </location>
</feature>
<feature type="glycosylation site" description="N-linked (GlcNAc...) asparagine" evidence="2">
    <location>
        <position position="265"/>
    </location>
</feature>
<feature type="glycosylation site" description="N-linked (GlcNAc...) asparagine" evidence="2">
    <location>
        <position position="378"/>
    </location>
</feature>
<feature type="disulfide bond" evidence="1">
    <location>
        <begin position="71"/>
        <end position="361"/>
    </location>
</feature>
<feature type="disulfide bond" evidence="1">
    <location>
        <begin position="235"/>
        <end position="249"/>
    </location>
</feature>
<feature type="disulfide bond" evidence="1">
    <location>
        <begin position="386"/>
        <end position="397"/>
    </location>
</feature>
<feature type="disulfide bond" evidence="1">
    <location>
        <begin position="391"/>
        <end position="446"/>
    </location>
</feature>
<feature type="disulfide bond" evidence="1">
    <location>
        <begin position="448"/>
        <end position="457"/>
    </location>
</feature>
<feature type="splice variant" id="VSP_015923" description="In isoform 2." evidence="6">
    <original>KWCDKRGM</original>
    <variation>GSST</variation>
    <location>
        <begin position="455"/>
        <end position="462"/>
    </location>
</feature>
<feature type="sequence conflict" description="In Ref. 1; AAC15949 and 2; AAL17822." evidence="7" ref="1 2">
    <original>P</original>
    <variation>S</variation>
    <location>
        <position position="16"/>
    </location>
</feature>
<feature type="sequence conflict" description="In Ref. 1; AAC15949." evidence="7" ref="1">
    <original>G</original>
    <variation>R</variation>
    <location>
        <position position="247"/>
    </location>
</feature>
<feature type="sequence conflict" description="In Ref. 2; AAL17822 and 3; AAL54881/AAL57173." evidence="7" ref="2 3">
    <original>E</original>
    <variation>G</variation>
    <location>
        <position position="284"/>
    </location>
</feature>
<feature type="sequence conflict" description="In Ref. 2; AAL17822 and 3; AAL54881/AAL57173." evidence="7" ref="2 3">
    <original>R</original>
    <variation>C</variation>
    <location>
        <position position="450"/>
    </location>
</feature>
<accession>Q91ZJ9</accession>
<accession>B1AV90</accession>
<accession>O70229</accession>
<accession>Q8CE62</accession>
<accession>Q8QZX3</accession>
<accession>Q8VBW7</accession>
<accession>Q8VDK0</accession>
<protein>
    <recommendedName>
        <fullName>Hyaluronidase-1</fullName>
        <shortName>Hyal-1</shortName>
        <ecNumber>3.2.1.35</ecNumber>
    </recommendedName>
    <alternativeName>
        <fullName>Hyaluronoglucosaminidase-1</fullName>
    </alternativeName>
</protein>
<proteinExistence type="evidence at protein level"/>
<organism>
    <name type="scientific">Mus musculus</name>
    <name type="common">Mouse</name>
    <dbReference type="NCBI Taxonomy" id="10090"/>
    <lineage>
        <taxon>Eukaryota</taxon>
        <taxon>Metazoa</taxon>
        <taxon>Chordata</taxon>
        <taxon>Craniata</taxon>
        <taxon>Vertebrata</taxon>
        <taxon>Euteleostomi</taxon>
        <taxon>Mammalia</taxon>
        <taxon>Eutheria</taxon>
        <taxon>Euarchontoglires</taxon>
        <taxon>Glires</taxon>
        <taxon>Rodentia</taxon>
        <taxon>Myomorpha</taxon>
        <taxon>Muroidea</taxon>
        <taxon>Muridae</taxon>
        <taxon>Murinae</taxon>
        <taxon>Mus</taxon>
        <taxon>Mus</taxon>
    </lineage>
</organism>
<reference key="1">
    <citation type="journal article" date="1998" name="Genomics">
        <title>The hyaluronidase gene HYAL1 maps to chromosome 3p21.2-p21.3 in human and 9F1-F2 in mouse, a conserved candidate tumor suppressor locus.</title>
        <authorList>
            <person name="Csoka A.B."/>
            <person name="Frost G.I."/>
            <person name="Heng H.H.Q."/>
            <person name="Scherer S.W."/>
            <person name="Mohapatra G."/>
            <person name="Stern R."/>
        </authorList>
    </citation>
    <scope>NUCLEOTIDE SEQUENCE [MRNA] (ISOFORM 1)</scope>
    <scope>TISSUE SPECIFICITY</scope>
    <scope>BIOPHYSICOCHEMICAL PROPERTIES</scope>
</reference>
<reference key="2">
    <citation type="journal article" date="2002" name="BMC Cell Biol.">
        <title>Transforming growth factor-beta1 blocks the enhancement of tumor necrosis factor cytotoxicity by hyaluronidase Hyal-2 in L929 fibroblasts.</title>
        <authorList>
            <person name="Chang N.-S."/>
        </authorList>
    </citation>
    <scope>NUCLEOTIDE SEQUENCE [MRNA] (ISOFORM 1)</scope>
    <scope>FUNCTION</scope>
    <source>
        <strain>C3H/HeJ</strain>
    </source>
</reference>
<reference key="3">
    <citation type="submission" date="2001-01" db="EMBL/GenBank/DDBJ databases">
        <title>Genomic sequence of the mouse Hyal1 locus encoding the mouse Hyal1, Fus2, and Hyal3 genes.</title>
        <authorList>
            <person name="Csoka A.B."/>
        </authorList>
    </citation>
    <scope>NUCLEOTIDE SEQUENCE [GENOMIC DNA]</scope>
</reference>
<reference key="4">
    <citation type="journal article" date="2005" name="Science">
        <title>The transcriptional landscape of the mammalian genome.</title>
        <authorList>
            <person name="Carninci P."/>
            <person name="Kasukawa T."/>
            <person name="Katayama S."/>
            <person name="Gough J."/>
            <person name="Frith M.C."/>
            <person name="Maeda N."/>
            <person name="Oyama R."/>
            <person name="Ravasi T."/>
            <person name="Lenhard B."/>
            <person name="Wells C."/>
            <person name="Kodzius R."/>
            <person name="Shimokawa K."/>
            <person name="Bajic V.B."/>
            <person name="Brenner S.E."/>
            <person name="Batalov S."/>
            <person name="Forrest A.R."/>
            <person name="Zavolan M."/>
            <person name="Davis M.J."/>
            <person name="Wilming L.G."/>
            <person name="Aidinis V."/>
            <person name="Allen J.E."/>
            <person name="Ambesi-Impiombato A."/>
            <person name="Apweiler R."/>
            <person name="Aturaliya R.N."/>
            <person name="Bailey T.L."/>
            <person name="Bansal M."/>
            <person name="Baxter L."/>
            <person name="Beisel K.W."/>
            <person name="Bersano T."/>
            <person name="Bono H."/>
            <person name="Chalk A.M."/>
            <person name="Chiu K.P."/>
            <person name="Choudhary V."/>
            <person name="Christoffels A."/>
            <person name="Clutterbuck D.R."/>
            <person name="Crowe M.L."/>
            <person name="Dalla E."/>
            <person name="Dalrymple B.P."/>
            <person name="de Bono B."/>
            <person name="Della Gatta G."/>
            <person name="di Bernardo D."/>
            <person name="Down T."/>
            <person name="Engstrom P."/>
            <person name="Fagiolini M."/>
            <person name="Faulkner G."/>
            <person name="Fletcher C.F."/>
            <person name="Fukushima T."/>
            <person name="Furuno M."/>
            <person name="Futaki S."/>
            <person name="Gariboldi M."/>
            <person name="Georgii-Hemming P."/>
            <person name="Gingeras T.R."/>
            <person name="Gojobori T."/>
            <person name="Green R.E."/>
            <person name="Gustincich S."/>
            <person name="Harbers M."/>
            <person name="Hayashi Y."/>
            <person name="Hensch T.K."/>
            <person name="Hirokawa N."/>
            <person name="Hill D."/>
            <person name="Huminiecki L."/>
            <person name="Iacono M."/>
            <person name="Ikeo K."/>
            <person name="Iwama A."/>
            <person name="Ishikawa T."/>
            <person name="Jakt M."/>
            <person name="Kanapin A."/>
            <person name="Katoh M."/>
            <person name="Kawasawa Y."/>
            <person name="Kelso J."/>
            <person name="Kitamura H."/>
            <person name="Kitano H."/>
            <person name="Kollias G."/>
            <person name="Krishnan S.P."/>
            <person name="Kruger A."/>
            <person name="Kummerfeld S.K."/>
            <person name="Kurochkin I.V."/>
            <person name="Lareau L.F."/>
            <person name="Lazarevic D."/>
            <person name="Lipovich L."/>
            <person name="Liu J."/>
            <person name="Liuni S."/>
            <person name="McWilliam S."/>
            <person name="Madan Babu M."/>
            <person name="Madera M."/>
            <person name="Marchionni L."/>
            <person name="Matsuda H."/>
            <person name="Matsuzawa S."/>
            <person name="Miki H."/>
            <person name="Mignone F."/>
            <person name="Miyake S."/>
            <person name="Morris K."/>
            <person name="Mottagui-Tabar S."/>
            <person name="Mulder N."/>
            <person name="Nakano N."/>
            <person name="Nakauchi H."/>
            <person name="Ng P."/>
            <person name="Nilsson R."/>
            <person name="Nishiguchi S."/>
            <person name="Nishikawa S."/>
            <person name="Nori F."/>
            <person name="Ohara O."/>
            <person name="Okazaki Y."/>
            <person name="Orlando V."/>
            <person name="Pang K.C."/>
            <person name="Pavan W.J."/>
            <person name="Pavesi G."/>
            <person name="Pesole G."/>
            <person name="Petrovsky N."/>
            <person name="Piazza S."/>
            <person name="Reed J."/>
            <person name="Reid J.F."/>
            <person name="Ring B.Z."/>
            <person name="Ringwald M."/>
            <person name="Rost B."/>
            <person name="Ruan Y."/>
            <person name="Salzberg S.L."/>
            <person name="Sandelin A."/>
            <person name="Schneider C."/>
            <person name="Schoenbach C."/>
            <person name="Sekiguchi K."/>
            <person name="Semple C.A."/>
            <person name="Seno S."/>
            <person name="Sessa L."/>
            <person name="Sheng Y."/>
            <person name="Shibata Y."/>
            <person name="Shimada H."/>
            <person name="Shimada K."/>
            <person name="Silva D."/>
            <person name="Sinclair B."/>
            <person name="Sperling S."/>
            <person name="Stupka E."/>
            <person name="Sugiura K."/>
            <person name="Sultana R."/>
            <person name="Takenaka Y."/>
            <person name="Taki K."/>
            <person name="Tammoja K."/>
            <person name="Tan S.L."/>
            <person name="Tang S."/>
            <person name="Taylor M.S."/>
            <person name="Tegner J."/>
            <person name="Teichmann S.A."/>
            <person name="Ueda H.R."/>
            <person name="van Nimwegen E."/>
            <person name="Verardo R."/>
            <person name="Wei C.L."/>
            <person name="Yagi K."/>
            <person name="Yamanishi H."/>
            <person name="Zabarovsky E."/>
            <person name="Zhu S."/>
            <person name="Zimmer A."/>
            <person name="Hide W."/>
            <person name="Bult C."/>
            <person name="Grimmond S.M."/>
            <person name="Teasdale R.D."/>
            <person name="Liu E.T."/>
            <person name="Brusic V."/>
            <person name="Quackenbush J."/>
            <person name="Wahlestedt C."/>
            <person name="Mattick J.S."/>
            <person name="Hume D.A."/>
            <person name="Kai C."/>
            <person name="Sasaki D."/>
            <person name="Tomaru Y."/>
            <person name="Fukuda S."/>
            <person name="Kanamori-Katayama M."/>
            <person name="Suzuki M."/>
            <person name="Aoki J."/>
            <person name="Arakawa T."/>
            <person name="Iida J."/>
            <person name="Imamura K."/>
            <person name="Itoh M."/>
            <person name="Kato T."/>
            <person name="Kawaji H."/>
            <person name="Kawagashira N."/>
            <person name="Kawashima T."/>
            <person name="Kojima M."/>
            <person name="Kondo S."/>
            <person name="Konno H."/>
            <person name="Nakano K."/>
            <person name="Ninomiya N."/>
            <person name="Nishio T."/>
            <person name="Okada M."/>
            <person name="Plessy C."/>
            <person name="Shibata K."/>
            <person name="Shiraki T."/>
            <person name="Suzuki S."/>
            <person name="Tagami M."/>
            <person name="Waki K."/>
            <person name="Watahiki A."/>
            <person name="Okamura-Oho Y."/>
            <person name="Suzuki H."/>
            <person name="Kawai J."/>
            <person name="Hayashizaki Y."/>
        </authorList>
    </citation>
    <scope>NUCLEOTIDE SEQUENCE [LARGE SCALE MRNA] (ISOFORM 2)</scope>
    <source>
        <strain>C57BL/6J</strain>
        <tissue>Skin</tissue>
    </source>
</reference>
<reference key="5">
    <citation type="journal article" date="2009" name="PLoS Biol.">
        <title>Lineage-specific biology revealed by a finished genome assembly of the mouse.</title>
        <authorList>
            <person name="Church D.M."/>
            <person name="Goodstadt L."/>
            <person name="Hillier L.W."/>
            <person name="Zody M.C."/>
            <person name="Goldstein S."/>
            <person name="She X."/>
            <person name="Bult C.J."/>
            <person name="Agarwala R."/>
            <person name="Cherry J.L."/>
            <person name="DiCuccio M."/>
            <person name="Hlavina W."/>
            <person name="Kapustin Y."/>
            <person name="Meric P."/>
            <person name="Maglott D."/>
            <person name="Birtle Z."/>
            <person name="Marques A.C."/>
            <person name="Graves T."/>
            <person name="Zhou S."/>
            <person name="Teague B."/>
            <person name="Potamousis K."/>
            <person name="Churas C."/>
            <person name="Place M."/>
            <person name="Herschleb J."/>
            <person name="Runnheim R."/>
            <person name="Forrest D."/>
            <person name="Amos-Landgraf J."/>
            <person name="Schwartz D.C."/>
            <person name="Cheng Z."/>
            <person name="Lindblad-Toh K."/>
            <person name="Eichler E.E."/>
            <person name="Ponting C.P."/>
        </authorList>
    </citation>
    <scope>NUCLEOTIDE SEQUENCE [LARGE SCALE GENOMIC DNA]</scope>
    <source>
        <strain>C57BL/6J</strain>
    </source>
</reference>
<reference key="6">
    <citation type="journal article" date="2004" name="Genome Res.">
        <title>The status, quality, and expansion of the NIH full-length cDNA project: the Mammalian Gene Collection (MGC).</title>
        <authorList>
            <consortium name="The MGC Project Team"/>
        </authorList>
    </citation>
    <scope>NUCLEOTIDE SEQUENCE [LARGE SCALE MRNA] (ISOFORM 1)</scope>
    <source>
        <strain>Czech II</strain>
        <tissue>Mammary gland</tissue>
    </source>
</reference>
<reference key="7">
    <citation type="journal article" date="2002" name="J. Biol. Chem.">
        <title>Characterization of the murine hyaluronidase gene region reveals complex organization and cotranscription of Hyal1 with downstream genes, Fus2 and Hyal3.</title>
        <authorList>
            <person name="Shuttleworth T.L."/>
            <person name="Wilson M.D."/>
            <person name="Wicklow B.A."/>
            <person name="Wilkins J.A."/>
            <person name="Triggs-Raine B.L."/>
        </authorList>
    </citation>
    <scope>NUCLEOTIDE SEQUENCE [MRNA] OF 331-462</scope>
    <scope>TISSUE SPECIFICITY</scope>
    <scope>DEVELOPMENTAL STAGE</scope>
    <source>
        <strain>129/Sv</strain>
    </source>
</reference>
<keyword id="KW-0025">Alternative splicing</keyword>
<keyword id="KW-1015">Disulfide bond</keyword>
<keyword id="KW-0245">EGF-like domain</keyword>
<keyword id="KW-0325">Glycoprotein</keyword>
<keyword id="KW-0326">Glycosidase</keyword>
<keyword id="KW-0378">Hydrolase</keyword>
<keyword id="KW-0458">Lysosome</keyword>
<keyword id="KW-1185">Reference proteome</keyword>
<keyword id="KW-0964">Secreted</keyword>
<keyword id="KW-0732">Signal</keyword>
<dbReference type="EC" id="3.2.1.35"/>
<dbReference type="EMBL" id="AF011567">
    <property type="protein sequence ID" value="AAC15949.1"/>
    <property type="molecule type" value="mRNA"/>
</dbReference>
<dbReference type="EMBL" id="AF422176">
    <property type="protein sequence ID" value="AAL17822.1"/>
    <property type="molecule type" value="mRNA"/>
</dbReference>
<dbReference type="EMBL" id="AF069741">
    <property type="protein sequence ID" value="AAL54881.1"/>
    <property type="molecule type" value="Genomic_DNA"/>
</dbReference>
<dbReference type="EMBL" id="AF338323">
    <property type="protein sequence ID" value="AAL57173.1"/>
    <property type="molecule type" value="Genomic_DNA"/>
</dbReference>
<dbReference type="EMBL" id="AK028942">
    <property type="protein sequence ID" value="BAC26206.1"/>
    <property type="molecule type" value="mRNA"/>
</dbReference>
<dbReference type="EMBL" id="AL672219">
    <property type="status" value="NOT_ANNOTATED_CDS"/>
    <property type="molecule type" value="Genomic_DNA"/>
</dbReference>
<dbReference type="EMBL" id="BC021636">
    <property type="protein sequence ID" value="AAH21636.1"/>
    <property type="molecule type" value="mRNA"/>
</dbReference>
<dbReference type="EMBL" id="AF417496">
    <property type="protein sequence ID" value="AAM14428.1"/>
    <property type="molecule type" value="mRNA"/>
</dbReference>
<dbReference type="EMBL" id="AF417497">
    <property type="protein sequence ID" value="AAM14430.1"/>
    <property type="molecule type" value="mRNA"/>
</dbReference>
<dbReference type="EMBL" id="AF417498">
    <property type="protein sequence ID" value="AAM14432.1"/>
    <property type="molecule type" value="mRNA"/>
</dbReference>
<dbReference type="RefSeq" id="NP_001318090.1">
    <property type="nucleotide sequence ID" value="NM_001331161.1"/>
</dbReference>
<dbReference type="RefSeq" id="NP_032343.2">
    <property type="nucleotide sequence ID" value="NM_008317.5"/>
</dbReference>
<dbReference type="SMR" id="Q91ZJ9"/>
<dbReference type="FunCoup" id="Q91ZJ9">
    <property type="interactions" value="191"/>
</dbReference>
<dbReference type="STRING" id="10090.ENSMUSP00000010195"/>
<dbReference type="CAZy" id="GH56">
    <property type="family name" value="Glycoside Hydrolase Family 56"/>
</dbReference>
<dbReference type="GlyCosmos" id="Q91ZJ9">
    <property type="glycosylation" value="5 sites, No reported glycans"/>
</dbReference>
<dbReference type="GlyGen" id="Q91ZJ9">
    <property type="glycosylation" value="5 sites"/>
</dbReference>
<dbReference type="PhosphoSitePlus" id="Q91ZJ9"/>
<dbReference type="PaxDb" id="10090-ENSMUSP00000010195"/>
<dbReference type="ProteomicsDB" id="273061">
    <molecule id="Q91ZJ9-1"/>
</dbReference>
<dbReference type="ProteomicsDB" id="273062">
    <molecule id="Q91ZJ9-2"/>
</dbReference>
<dbReference type="Antibodypedia" id="1046">
    <property type="antibodies" value="288 antibodies from 30 providers"/>
</dbReference>
<dbReference type="DNASU" id="15586"/>
<dbReference type="Ensembl" id="ENSMUST00000010195.14">
    <molecule id="Q91ZJ9-1"/>
    <property type="protein sequence ID" value="ENSMUSP00000010195.8"/>
    <property type="gene ID" value="ENSMUSG00000010051.16"/>
</dbReference>
<dbReference type="Ensembl" id="ENSMUST00000112387.9">
    <molecule id="Q91ZJ9-2"/>
    <property type="protein sequence ID" value="ENSMUSP00000108006.3"/>
    <property type="gene ID" value="ENSMUSG00000010051.16"/>
</dbReference>
<dbReference type="GeneID" id="15586"/>
<dbReference type="KEGG" id="mmu:15586"/>
<dbReference type="UCSC" id="uc009rlv.1">
    <molecule id="Q91ZJ9-1"/>
    <property type="organism name" value="mouse"/>
</dbReference>
<dbReference type="UCSC" id="uc009rlw.1">
    <molecule id="Q91ZJ9-2"/>
    <property type="organism name" value="mouse"/>
</dbReference>
<dbReference type="AGR" id="MGI:96298"/>
<dbReference type="CTD" id="3373"/>
<dbReference type="MGI" id="MGI:96298">
    <property type="gene designation" value="Hyal1"/>
</dbReference>
<dbReference type="VEuPathDB" id="HostDB:ENSMUSG00000010051"/>
<dbReference type="eggNOG" id="ENOG502QTUU">
    <property type="taxonomic scope" value="Eukaryota"/>
</dbReference>
<dbReference type="GeneTree" id="ENSGT01020000230364"/>
<dbReference type="HOGENOM" id="CLU_036366_0_0_1"/>
<dbReference type="InParanoid" id="Q91ZJ9"/>
<dbReference type="OMA" id="WVRNWDS"/>
<dbReference type="OrthoDB" id="5796153at2759"/>
<dbReference type="PhylomeDB" id="Q91ZJ9"/>
<dbReference type="TreeFam" id="TF321598"/>
<dbReference type="Reactome" id="R-MMU-2024101">
    <property type="pathway name" value="CS/DS degradation"/>
</dbReference>
<dbReference type="Reactome" id="R-MMU-2160916">
    <property type="pathway name" value="Hyaluronan uptake and degradation"/>
</dbReference>
<dbReference type="BioGRID-ORCS" id="15586">
    <property type="hits" value="2 hits in 80 CRISPR screens"/>
</dbReference>
<dbReference type="ChiTaRS" id="Hyal1">
    <property type="organism name" value="mouse"/>
</dbReference>
<dbReference type="PRO" id="PR:Q91ZJ9"/>
<dbReference type="Proteomes" id="UP000000589">
    <property type="component" value="Chromosome 9"/>
</dbReference>
<dbReference type="RNAct" id="Q91ZJ9">
    <property type="molecule type" value="protein"/>
</dbReference>
<dbReference type="Bgee" id="ENSMUSG00000010051">
    <property type="expression patterns" value="Expressed in hepatobiliary system and 64 other cell types or tissues"/>
</dbReference>
<dbReference type="ExpressionAtlas" id="Q91ZJ9">
    <property type="expression patterns" value="baseline and differential"/>
</dbReference>
<dbReference type="GO" id="GO:0031410">
    <property type="term" value="C:cytoplasmic vesicle"/>
    <property type="evidence" value="ECO:0000250"/>
    <property type="project" value="UniProtKB"/>
</dbReference>
<dbReference type="GO" id="GO:0005615">
    <property type="term" value="C:extracellular space"/>
    <property type="evidence" value="ECO:0000250"/>
    <property type="project" value="UniProtKB"/>
</dbReference>
<dbReference type="GO" id="GO:0036117">
    <property type="term" value="C:hyaluranon cable"/>
    <property type="evidence" value="ECO:0000250"/>
    <property type="project" value="UniProtKB"/>
</dbReference>
<dbReference type="GO" id="GO:0005764">
    <property type="term" value="C:lysosome"/>
    <property type="evidence" value="ECO:0000314"/>
    <property type="project" value="MGI"/>
</dbReference>
<dbReference type="GO" id="GO:0052757">
    <property type="term" value="F:chondroitin hydrolase activity"/>
    <property type="evidence" value="ECO:0000315"/>
    <property type="project" value="MGI"/>
</dbReference>
<dbReference type="GO" id="GO:0004415">
    <property type="term" value="F:hyalurononglucosaminidase activity"/>
    <property type="evidence" value="ECO:0000315"/>
    <property type="project" value="MGI"/>
</dbReference>
<dbReference type="GO" id="GO:0005975">
    <property type="term" value="P:carbohydrate metabolic process"/>
    <property type="evidence" value="ECO:0007669"/>
    <property type="project" value="InterPro"/>
</dbReference>
<dbReference type="GO" id="GO:0051216">
    <property type="term" value="P:cartilage development"/>
    <property type="evidence" value="ECO:0000250"/>
    <property type="project" value="UniProtKB"/>
</dbReference>
<dbReference type="GO" id="GO:0044344">
    <property type="term" value="P:cellular response to fibroblast growth factor stimulus"/>
    <property type="evidence" value="ECO:0007669"/>
    <property type="project" value="Ensembl"/>
</dbReference>
<dbReference type="GO" id="GO:0071347">
    <property type="term" value="P:cellular response to interleukin-1"/>
    <property type="evidence" value="ECO:0000250"/>
    <property type="project" value="UniProtKB"/>
</dbReference>
<dbReference type="GO" id="GO:0071467">
    <property type="term" value="P:cellular response to pH"/>
    <property type="evidence" value="ECO:0000250"/>
    <property type="project" value="UniProtKB"/>
</dbReference>
<dbReference type="GO" id="GO:0036120">
    <property type="term" value="P:cellular response to platelet-derived growth factor stimulus"/>
    <property type="evidence" value="ECO:0000250"/>
    <property type="project" value="UniProtKB"/>
</dbReference>
<dbReference type="GO" id="GO:0071356">
    <property type="term" value="P:cellular response to tumor necrosis factor"/>
    <property type="evidence" value="ECO:0007669"/>
    <property type="project" value="Ensembl"/>
</dbReference>
<dbReference type="GO" id="GO:0071493">
    <property type="term" value="P:cellular response to UV-B"/>
    <property type="evidence" value="ECO:0000250"/>
    <property type="project" value="UniProtKB"/>
</dbReference>
<dbReference type="GO" id="GO:0030207">
    <property type="term" value="P:chondroitin sulfate proteoglycan catabolic process"/>
    <property type="evidence" value="ECO:0000315"/>
    <property type="project" value="MGI"/>
</dbReference>
<dbReference type="GO" id="GO:0060272">
    <property type="term" value="P:embryonic skeletal joint morphogenesis"/>
    <property type="evidence" value="ECO:0000315"/>
    <property type="project" value="MGI"/>
</dbReference>
<dbReference type="GO" id="GO:0030214">
    <property type="term" value="P:hyaluronan catabolic process"/>
    <property type="evidence" value="ECO:0000315"/>
    <property type="project" value="MGI"/>
</dbReference>
<dbReference type="GO" id="GO:0030212">
    <property type="term" value="P:hyaluronan metabolic process"/>
    <property type="evidence" value="ECO:0000250"/>
    <property type="project" value="UniProtKB"/>
</dbReference>
<dbReference type="GO" id="GO:0006954">
    <property type="term" value="P:inflammatory response"/>
    <property type="evidence" value="ECO:0000250"/>
    <property type="project" value="UniProtKB"/>
</dbReference>
<dbReference type="GO" id="GO:0030308">
    <property type="term" value="P:negative regulation of cell growth"/>
    <property type="evidence" value="ECO:0000250"/>
    <property type="project" value="UniProtKB"/>
</dbReference>
<dbReference type="GO" id="GO:0045766">
    <property type="term" value="P:positive regulation of angiogenesis"/>
    <property type="evidence" value="ECO:0000250"/>
    <property type="project" value="UniProtKB"/>
</dbReference>
<dbReference type="GO" id="GO:0045785">
    <property type="term" value="P:positive regulation of cell adhesion"/>
    <property type="evidence" value="ECO:0000250"/>
    <property type="project" value="UniProtKB"/>
</dbReference>
<dbReference type="GO" id="GO:0030307">
    <property type="term" value="P:positive regulation of cell growth"/>
    <property type="evidence" value="ECO:0000250"/>
    <property type="project" value="UniProtKB"/>
</dbReference>
<dbReference type="GO" id="GO:1900106">
    <property type="term" value="P:positive regulation of hyaluranon cable assembly"/>
    <property type="evidence" value="ECO:0000250"/>
    <property type="project" value="UniProtKB"/>
</dbReference>
<dbReference type="GO" id="GO:0046677">
    <property type="term" value="P:response to antibiotic"/>
    <property type="evidence" value="ECO:0000250"/>
    <property type="project" value="UniProtKB"/>
</dbReference>
<dbReference type="GO" id="GO:0000302">
    <property type="term" value="P:response to reactive oxygen species"/>
    <property type="evidence" value="ECO:0000250"/>
    <property type="project" value="UniProtKB"/>
</dbReference>
<dbReference type="GO" id="GO:0009615">
    <property type="term" value="P:response to virus"/>
    <property type="evidence" value="ECO:0000314"/>
    <property type="project" value="UniProtKB"/>
</dbReference>
<dbReference type="FunFam" id="3.20.20.70:FF:000065">
    <property type="entry name" value="Hyaluronidase"/>
    <property type="match status" value="1"/>
</dbReference>
<dbReference type="Gene3D" id="3.20.20.70">
    <property type="entry name" value="Aldolase class I"/>
    <property type="match status" value="1"/>
</dbReference>
<dbReference type="InterPro" id="IPR013785">
    <property type="entry name" value="Aldolase_TIM"/>
</dbReference>
<dbReference type="InterPro" id="IPR017853">
    <property type="entry name" value="Glycoside_hydrolase_SF"/>
</dbReference>
<dbReference type="InterPro" id="IPR018155">
    <property type="entry name" value="Hyaluronidase"/>
</dbReference>
<dbReference type="PANTHER" id="PTHR11769">
    <property type="entry name" value="HYALURONIDASE"/>
    <property type="match status" value="1"/>
</dbReference>
<dbReference type="PANTHER" id="PTHR11769:SF23">
    <property type="entry name" value="HYALURONIDASE-1"/>
    <property type="match status" value="1"/>
</dbReference>
<dbReference type="Pfam" id="PF01630">
    <property type="entry name" value="Glyco_hydro_56"/>
    <property type="match status" value="1"/>
</dbReference>
<dbReference type="PIRSF" id="PIRSF038193">
    <property type="entry name" value="Hyaluronidase"/>
    <property type="match status" value="1"/>
</dbReference>
<dbReference type="PRINTS" id="PR00846">
    <property type="entry name" value="GLHYDRLASE56"/>
</dbReference>
<dbReference type="SUPFAM" id="SSF51445">
    <property type="entry name" value="(Trans)glycosidases"/>
    <property type="match status" value="1"/>
</dbReference>
<dbReference type="PROSITE" id="PS00022">
    <property type="entry name" value="EGF_1"/>
    <property type="match status" value="1"/>
</dbReference>
<dbReference type="PROSITE" id="PS01186">
    <property type="entry name" value="EGF_2"/>
    <property type="match status" value="1"/>
</dbReference>
<gene>
    <name type="primary">Hyal1</name>
</gene>
<evidence type="ECO:0000250" key="1"/>
<evidence type="ECO:0000255" key="2"/>
<evidence type="ECO:0000269" key="3">
    <source>
    </source>
</evidence>
<evidence type="ECO:0000269" key="4">
    <source>
    </source>
</evidence>
<evidence type="ECO:0000269" key="5">
    <source>
    </source>
</evidence>
<evidence type="ECO:0000303" key="6">
    <source>
    </source>
</evidence>
<evidence type="ECO:0000305" key="7"/>